<accession>B1JYQ0</accession>
<keyword id="KW-0687">Ribonucleoprotein</keyword>
<keyword id="KW-0689">Ribosomal protein</keyword>
<keyword id="KW-0694">RNA-binding</keyword>
<keyword id="KW-0699">rRNA-binding</keyword>
<dbReference type="EMBL" id="CP000958">
    <property type="protein sequence ID" value="ACA91973.1"/>
    <property type="molecule type" value="Genomic_DNA"/>
</dbReference>
<dbReference type="RefSeq" id="WP_011546248.1">
    <property type="nucleotide sequence ID" value="NC_010508.1"/>
</dbReference>
<dbReference type="SMR" id="B1JYQ0"/>
<dbReference type="GeneID" id="83049599"/>
<dbReference type="KEGG" id="bcm:Bcenmc03_2814"/>
<dbReference type="HOGENOM" id="CLU_075939_0_1_4"/>
<dbReference type="Proteomes" id="UP000002169">
    <property type="component" value="Chromosome 1"/>
</dbReference>
<dbReference type="GO" id="GO:0022625">
    <property type="term" value="C:cytosolic large ribosomal subunit"/>
    <property type="evidence" value="ECO:0007669"/>
    <property type="project" value="TreeGrafter"/>
</dbReference>
<dbReference type="GO" id="GO:0008097">
    <property type="term" value="F:5S rRNA binding"/>
    <property type="evidence" value="ECO:0007669"/>
    <property type="project" value="InterPro"/>
</dbReference>
<dbReference type="GO" id="GO:0003735">
    <property type="term" value="F:structural constituent of ribosome"/>
    <property type="evidence" value="ECO:0007669"/>
    <property type="project" value="InterPro"/>
</dbReference>
<dbReference type="GO" id="GO:0006412">
    <property type="term" value="P:translation"/>
    <property type="evidence" value="ECO:0007669"/>
    <property type="project" value="UniProtKB-UniRule"/>
</dbReference>
<dbReference type="CDD" id="cd00495">
    <property type="entry name" value="Ribosomal_L25_TL5_CTC"/>
    <property type="match status" value="1"/>
</dbReference>
<dbReference type="Gene3D" id="2.170.120.20">
    <property type="entry name" value="Ribosomal protein L25, beta domain"/>
    <property type="match status" value="1"/>
</dbReference>
<dbReference type="Gene3D" id="2.40.240.10">
    <property type="entry name" value="Ribosomal Protein L25, Chain P"/>
    <property type="match status" value="1"/>
</dbReference>
<dbReference type="HAMAP" id="MF_01334">
    <property type="entry name" value="Ribosomal_bL25_CTC"/>
    <property type="match status" value="1"/>
</dbReference>
<dbReference type="InterPro" id="IPR020056">
    <property type="entry name" value="Rbsml_bL25/Gln-tRNA_synth_N"/>
</dbReference>
<dbReference type="InterPro" id="IPR011035">
    <property type="entry name" value="Ribosomal_bL25/Gln-tRNA_synth"/>
</dbReference>
<dbReference type="InterPro" id="IPR020057">
    <property type="entry name" value="Ribosomal_bL25_b-dom"/>
</dbReference>
<dbReference type="InterPro" id="IPR037121">
    <property type="entry name" value="Ribosomal_bL25_C"/>
</dbReference>
<dbReference type="InterPro" id="IPR001021">
    <property type="entry name" value="Ribosomal_bL25_long"/>
</dbReference>
<dbReference type="InterPro" id="IPR029751">
    <property type="entry name" value="Ribosomal_L25_dom"/>
</dbReference>
<dbReference type="InterPro" id="IPR020930">
    <property type="entry name" value="Ribosomal_uL5_bac-type"/>
</dbReference>
<dbReference type="NCBIfam" id="TIGR00731">
    <property type="entry name" value="bL25_bact_ctc"/>
    <property type="match status" value="1"/>
</dbReference>
<dbReference type="NCBIfam" id="NF004128">
    <property type="entry name" value="PRK05618.1-2"/>
    <property type="match status" value="1"/>
</dbReference>
<dbReference type="NCBIfam" id="NF004130">
    <property type="entry name" value="PRK05618.1-5"/>
    <property type="match status" value="1"/>
</dbReference>
<dbReference type="NCBIfam" id="NF004612">
    <property type="entry name" value="PRK05943.1"/>
    <property type="match status" value="1"/>
</dbReference>
<dbReference type="PANTHER" id="PTHR33284">
    <property type="entry name" value="RIBOSOMAL PROTEIN L25/GLN-TRNA SYNTHETASE, ANTI-CODON-BINDING DOMAIN-CONTAINING PROTEIN"/>
    <property type="match status" value="1"/>
</dbReference>
<dbReference type="PANTHER" id="PTHR33284:SF1">
    <property type="entry name" value="RIBOSOMAL PROTEIN L25_GLN-TRNA SYNTHETASE, ANTI-CODON-BINDING DOMAIN-CONTAINING PROTEIN"/>
    <property type="match status" value="1"/>
</dbReference>
<dbReference type="Pfam" id="PF01386">
    <property type="entry name" value="Ribosomal_L25p"/>
    <property type="match status" value="1"/>
</dbReference>
<dbReference type="Pfam" id="PF14693">
    <property type="entry name" value="Ribosomal_TL5_C"/>
    <property type="match status" value="1"/>
</dbReference>
<dbReference type="SUPFAM" id="SSF50715">
    <property type="entry name" value="Ribosomal protein L25-like"/>
    <property type="match status" value="1"/>
</dbReference>
<comment type="function">
    <text evidence="1">This is one of the proteins that binds to the 5S RNA in the ribosome where it forms part of the central protuberance.</text>
</comment>
<comment type="subunit">
    <text evidence="1">Part of the 50S ribosomal subunit; part of the 5S rRNA/L5/L18/L25 subcomplex. Contacts the 5S rRNA. Binds to the 5S rRNA independently of L5 and L18.</text>
</comment>
<comment type="similarity">
    <text evidence="1">Belongs to the bacterial ribosomal protein bL25 family. CTC subfamily.</text>
</comment>
<gene>
    <name evidence="1" type="primary">rplY</name>
    <name evidence="1" type="synonym">ctc</name>
    <name type="ordered locus">Bcenmc03_2814</name>
</gene>
<protein>
    <recommendedName>
        <fullName evidence="1">Large ribosomal subunit protein bL25</fullName>
    </recommendedName>
    <alternativeName>
        <fullName evidence="2">50S ribosomal protein L25</fullName>
    </alternativeName>
    <alternativeName>
        <fullName evidence="1">General stress protein CTC</fullName>
    </alternativeName>
</protein>
<sequence>MKVVAFERQQQGTGASRRLRNAGKTTGIVYGGEAAPQKIELDHNALWHALKKEAFHSSILDLEVAGQSQQVLLRDVQYHPFKQLVLHVDFQRVDAKKKLHTKAPLHFLNAEVSPAVKLSSAIVSHVATEIEIECLPADLPEFLEVDLSKIEAGQSLHAKDIALPKGVALVAHVDAENPVIASATVPAGAVSDAAEGETPAA</sequence>
<organism>
    <name type="scientific">Burkholderia orbicola (strain MC0-3)</name>
    <dbReference type="NCBI Taxonomy" id="406425"/>
    <lineage>
        <taxon>Bacteria</taxon>
        <taxon>Pseudomonadati</taxon>
        <taxon>Pseudomonadota</taxon>
        <taxon>Betaproteobacteria</taxon>
        <taxon>Burkholderiales</taxon>
        <taxon>Burkholderiaceae</taxon>
        <taxon>Burkholderia</taxon>
        <taxon>Burkholderia cepacia complex</taxon>
        <taxon>Burkholderia orbicola</taxon>
    </lineage>
</organism>
<name>RL25_BURO0</name>
<evidence type="ECO:0000255" key="1">
    <source>
        <dbReference type="HAMAP-Rule" id="MF_01334"/>
    </source>
</evidence>
<evidence type="ECO:0000305" key="2"/>
<proteinExistence type="inferred from homology"/>
<feature type="chain" id="PRO_1000142496" description="Large ribosomal subunit protein bL25">
    <location>
        <begin position="1"/>
        <end position="201"/>
    </location>
</feature>
<reference key="1">
    <citation type="submission" date="2008-02" db="EMBL/GenBank/DDBJ databases">
        <title>Complete sequence of chromosome 1 of Burkholderia cenocepacia MC0-3.</title>
        <authorList>
            <person name="Copeland A."/>
            <person name="Lucas S."/>
            <person name="Lapidus A."/>
            <person name="Barry K."/>
            <person name="Bruce D."/>
            <person name="Goodwin L."/>
            <person name="Glavina del Rio T."/>
            <person name="Dalin E."/>
            <person name="Tice H."/>
            <person name="Pitluck S."/>
            <person name="Chain P."/>
            <person name="Malfatti S."/>
            <person name="Shin M."/>
            <person name="Vergez L."/>
            <person name="Schmutz J."/>
            <person name="Larimer F."/>
            <person name="Land M."/>
            <person name="Hauser L."/>
            <person name="Kyrpides N."/>
            <person name="Mikhailova N."/>
            <person name="Tiedje J."/>
            <person name="Richardson P."/>
        </authorList>
    </citation>
    <scope>NUCLEOTIDE SEQUENCE [LARGE SCALE GENOMIC DNA]</scope>
    <source>
        <strain>MC0-3</strain>
    </source>
</reference>